<gene>
    <name type="primary">CUL1</name>
</gene>
<evidence type="ECO:0000250" key="1">
    <source>
        <dbReference type="UniProtKB" id="Q13616"/>
    </source>
</evidence>
<evidence type="ECO:0000250" key="2">
    <source>
        <dbReference type="UniProtKB" id="Q9WTX6"/>
    </source>
</evidence>
<evidence type="ECO:0000255" key="3"/>
<evidence type="ECO:0000255" key="4">
    <source>
        <dbReference type="PROSITE-ProRule" id="PRU00330"/>
    </source>
</evidence>
<sequence>MSSTRSQNPHGLKQIGLDQIWDDLRAGIQQVYTRQSMAKSRYMELYTHVYNYCTSVHQSNQARGAGVPPSKSKKGQTPGGAQFVGLELYKRLKEFLKNYLTNLLKDGEDLMDESVLKFYTQQWEDYRFSSKVLNGICAYLNRHWVRRECDEGRKGIYEIYSLALVTWRDCLFRPLNKQVTNAVLKLIEKERNGETINTRLISGVVQSYVELGLNEDDAFAKGPTLTVYKESFESQFLADTERFYTRESTEFLQQNPVTEYMKKAEARLLEEQRRVQVYLHESTQDELARKCEQVLIEKHLEIFHTEFQNLLDADKNEDLGRMYNLVSRIQDGLGELKKLLETHIHNQGLAAIEKCGEAALNDPKMYVQTVLDVHKKYNALVMSAFNNDAGFVAALDKACGRFINNNAVTKMAQSSSKSPELLARYCDSLLKKSSKNPEEAELEDTLNQVMVVFKYIEDKDVFQKFYAKMLAKRLVHQNSASDDAEASMISKLKQACGFEYTSKLQRMFQDIGVSKDLNEQFKKHLTNSEPLDLDFSIQVLSSGSWPFQQSCTFALPSELERSYQRFTAFYASRHSGRKLTWLYQLSKGELVTNCFKNRYTLQASTFQMAILLQYNTEDAYTVQQLTDSTQIKMDILAQVLQILLKSKLLVLEDENANVDEVELKPDTLIKLYLGYKNKKLRVNINVPMKTEQKQEQETTHKNIEEDRKLLIQAAIVRIMKMRKVLKHQQLLGEVLTQLSSRFKPRVPVIKKCIDILIEKEYLERVDGEKDTYSYLA</sequence>
<dbReference type="EMBL" id="CR861282">
    <property type="protein sequence ID" value="CAH93350.1"/>
    <property type="molecule type" value="mRNA"/>
</dbReference>
<dbReference type="RefSeq" id="NP_001126972.1">
    <property type="nucleotide sequence ID" value="NM_001133500.3"/>
</dbReference>
<dbReference type="RefSeq" id="NP_001128951.2">
    <property type="nucleotide sequence ID" value="NM_001135479.4"/>
</dbReference>
<dbReference type="RefSeq" id="XP_009241654.1">
    <property type="nucleotide sequence ID" value="XM_009243379.1"/>
</dbReference>
<dbReference type="RefSeq" id="XP_009241655.1">
    <property type="nucleotide sequence ID" value="XM_009243380.1"/>
</dbReference>
<dbReference type="RefSeq" id="XP_054415081.1">
    <property type="nucleotide sequence ID" value="XM_054559106.2"/>
</dbReference>
<dbReference type="RefSeq" id="XP_054415082.1">
    <property type="nucleotide sequence ID" value="XM_054559107.2"/>
</dbReference>
<dbReference type="RefSeq" id="XP_054415083.1">
    <property type="nucleotide sequence ID" value="XM_054559108.2"/>
</dbReference>
<dbReference type="SMR" id="Q5R4G6"/>
<dbReference type="FunCoup" id="Q5R4G6">
    <property type="interactions" value="3207"/>
</dbReference>
<dbReference type="STRING" id="9601.ENSPPYP00000020352"/>
<dbReference type="Ensembl" id="ENSPPYT00000021153.2">
    <property type="protein sequence ID" value="ENSPPYP00000020352.1"/>
    <property type="gene ID" value="ENSPPYG00000018146.3"/>
</dbReference>
<dbReference type="GeneID" id="100189917"/>
<dbReference type="KEGG" id="pon:100189917"/>
<dbReference type="CTD" id="8454"/>
<dbReference type="eggNOG" id="KOG2166">
    <property type="taxonomic scope" value="Eukaryota"/>
</dbReference>
<dbReference type="GeneTree" id="ENSGT00940000154774"/>
<dbReference type="HOGENOM" id="CLU_004747_6_1_1"/>
<dbReference type="InParanoid" id="Q5R4G6"/>
<dbReference type="OMA" id="IREWDRY"/>
<dbReference type="OrthoDB" id="27073at2759"/>
<dbReference type="TreeFam" id="TF101151"/>
<dbReference type="UniPathway" id="UPA00143"/>
<dbReference type="Proteomes" id="UP000001595">
    <property type="component" value="Chromosome 7"/>
</dbReference>
<dbReference type="GO" id="GO:1990452">
    <property type="term" value="C:Parkin-FBXW7-Cul1 ubiquitin ligase complex"/>
    <property type="evidence" value="ECO:0007669"/>
    <property type="project" value="Ensembl"/>
</dbReference>
<dbReference type="GO" id="GO:0005886">
    <property type="term" value="C:plasma membrane"/>
    <property type="evidence" value="ECO:0000250"/>
    <property type="project" value="UniProtKB"/>
</dbReference>
<dbReference type="GO" id="GO:0019005">
    <property type="term" value="C:SCF ubiquitin ligase complex"/>
    <property type="evidence" value="ECO:0000250"/>
    <property type="project" value="UniProtKB"/>
</dbReference>
<dbReference type="GO" id="GO:0160072">
    <property type="term" value="F:ubiquitin ligase complex scaffold activity"/>
    <property type="evidence" value="ECO:0007669"/>
    <property type="project" value="Ensembl"/>
</dbReference>
<dbReference type="GO" id="GO:0031625">
    <property type="term" value="F:ubiquitin protein ligase binding"/>
    <property type="evidence" value="ECO:0007669"/>
    <property type="project" value="Ensembl"/>
</dbReference>
<dbReference type="GO" id="GO:0009887">
    <property type="term" value="P:animal organ morphogenesis"/>
    <property type="evidence" value="ECO:0007669"/>
    <property type="project" value="Ensembl"/>
</dbReference>
<dbReference type="GO" id="GO:0006915">
    <property type="term" value="P:apoptotic process"/>
    <property type="evidence" value="ECO:0007669"/>
    <property type="project" value="Ensembl"/>
</dbReference>
<dbReference type="GO" id="GO:0008283">
    <property type="term" value="P:cell population proliferation"/>
    <property type="evidence" value="ECO:0007669"/>
    <property type="project" value="Ensembl"/>
</dbReference>
<dbReference type="GO" id="GO:0043123">
    <property type="term" value="P:positive regulation of canonical NF-kappaB signal transduction"/>
    <property type="evidence" value="ECO:0007669"/>
    <property type="project" value="Ensembl"/>
</dbReference>
<dbReference type="GO" id="GO:0070936">
    <property type="term" value="P:protein K48-linked ubiquitination"/>
    <property type="evidence" value="ECO:0007669"/>
    <property type="project" value="Ensembl"/>
</dbReference>
<dbReference type="GO" id="GO:0006513">
    <property type="term" value="P:protein monoubiquitination"/>
    <property type="evidence" value="ECO:0007669"/>
    <property type="project" value="Ensembl"/>
</dbReference>
<dbReference type="GO" id="GO:0031146">
    <property type="term" value="P:SCF-dependent proteasomal ubiquitin-dependent protein catabolic process"/>
    <property type="evidence" value="ECO:0000250"/>
    <property type="project" value="UniProtKB"/>
</dbReference>
<dbReference type="FunFam" id="1.10.10.10:FF:000014">
    <property type="entry name" value="Cullin 1"/>
    <property type="match status" value="1"/>
</dbReference>
<dbReference type="FunFam" id="1.10.10.10:FF:000161">
    <property type="entry name" value="Cullin 1"/>
    <property type="match status" value="1"/>
</dbReference>
<dbReference type="FunFam" id="1.20.1310.10:FF:000007">
    <property type="entry name" value="Cullin 1"/>
    <property type="match status" value="1"/>
</dbReference>
<dbReference type="FunFam" id="1.20.1310.10:FF:000011">
    <property type="entry name" value="Cullin 1"/>
    <property type="match status" value="1"/>
</dbReference>
<dbReference type="FunFam" id="1.20.1310.10:FF:000019">
    <property type="entry name" value="Cullin 1"/>
    <property type="match status" value="1"/>
</dbReference>
<dbReference type="FunFam" id="3.30.230.130:FF:000003">
    <property type="entry name" value="Cullin 2"/>
    <property type="match status" value="1"/>
</dbReference>
<dbReference type="FunFam" id="1.20.1310.10:FF:000023">
    <property type="entry name" value="cullin-1"/>
    <property type="match status" value="1"/>
</dbReference>
<dbReference type="FunFam" id="4.10.1030.10:FF:000001">
    <property type="entry name" value="Putative Cullin-1"/>
    <property type="match status" value="1"/>
</dbReference>
<dbReference type="Gene3D" id="1.20.1310.10">
    <property type="entry name" value="Cullin Repeats"/>
    <property type="match status" value="4"/>
</dbReference>
<dbReference type="Gene3D" id="4.10.1030.10">
    <property type="entry name" value="Ring Box Chain A, domain 5"/>
    <property type="match status" value="1"/>
</dbReference>
<dbReference type="Gene3D" id="1.10.10.10">
    <property type="entry name" value="Winged helix-like DNA-binding domain superfamily/Winged helix DNA-binding domain"/>
    <property type="match status" value="2"/>
</dbReference>
<dbReference type="InterPro" id="IPR045093">
    <property type="entry name" value="Cullin"/>
</dbReference>
<dbReference type="InterPro" id="IPR016157">
    <property type="entry name" value="Cullin_CS"/>
</dbReference>
<dbReference type="InterPro" id="IPR016158">
    <property type="entry name" value="Cullin_homology"/>
</dbReference>
<dbReference type="InterPro" id="IPR036317">
    <property type="entry name" value="Cullin_homology_sf"/>
</dbReference>
<dbReference type="InterPro" id="IPR001373">
    <property type="entry name" value="Cullin_N"/>
</dbReference>
<dbReference type="InterPro" id="IPR019559">
    <property type="entry name" value="Cullin_neddylation_domain"/>
</dbReference>
<dbReference type="InterPro" id="IPR016159">
    <property type="entry name" value="Cullin_repeat-like_dom_sf"/>
</dbReference>
<dbReference type="InterPro" id="IPR036388">
    <property type="entry name" value="WH-like_DNA-bd_sf"/>
</dbReference>
<dbReference type="InterPro" id="IPR036390">
    <property type="entry name" value="WH_DNA-bd_sf"/>
</dbReference>
<dbReference type="PANTHER" id="PTHR11932">
    <property type="entry name" value="CULLIN"/>
    <property type="match status" value="1"/>
</dbReference>
<dbReference type="Pfam" id="PF00888">
    <property type="entry name" value="Cullin"/>
    <property type="match status" value="1"/>
</dbReference>
<dbReference type="Pfam" id="PF10557">
    <property type="entry name" value="Cullin_Nedd8"/>
    <property type="match status" value="1"/>
</dbReference>
<dbReference type="SMART" id="SM00182">
    <property type="entry name" value="CULLIN"/>
    <property type="match status" value="1"/>
</dbReference>
<dbReference type="SMART" id="SM00884">
    <property type="entry name" value="Cullin_Nedd8"/>
    <property type="match status" value="1"/>
</dbReference>
<dbReference type="SUPFAM" id="SSF75632">
    <property type="entry name" value="Cullin homology domain"/>
    <property type="match status" value="1"/>
</dbReference>
<dbReference type="SUPFAM" id="SSF74788">
    <property type="entry name" value="Cullin repeat-like"/>
    <property type="match status" value="1"/>
</dbReference>
<dbReference type="SUPFAM" id="SSF46785">
    <property type="entry name" value="Winged helix' DNA-binding domain"/>
    <property type="match status" value="1"/>
</dbReference>
<dbReference type="PROSITE" id="PS01256">
    <property type="entry name" value="CULLIN_1"/>
    <property type="match status" value="1"/>
</dbReference>
<dbReference type="PROSITE" id="PS50069">
    <property type="entry name" value="CULLIN_2"/>
    <property type="match status" value="1"/>
</dbReference>
<protein>
    <recommendedName>
        <fullName>Cullin-1</fullName>
        <shortName>CUL-1</shortName>
    </recommendedName>
</protein>
<feature type="chain" id="PRO_0000119789" description="Cullin-1">
    <location>
        <begin position="1"/>
        <end position="776"/>
    </location>
</feature>
<feature type="domain" description="Cullin neddylation" evidence="3">
    <location>
        <begin position="706"/>
        <end position="766"/>
    </location>
</feature>
<feature type="modified residue" description="Omega-N-methylarginine" evidence="1">
    <location>
        <position position="63"/>
    </location>
</feature>
<feature type="cross-link" description="Glycyl lysine isopeptide (Lys-Gly) (interchain with G-Cter in NEDD8)" evidence="1">
    <location>
        <position position="720"/>
    </location>
</feature>
<proteinExistence type="evidence at transcript level"/>
<reference key="1">
    <citation type="submission" date="2004-11" db="EMBL/GenBank/DDBJ databases">
        <authorList>
            <consortium name="The German cDNA consortium"/>
        </authorList>
    </citation>
    <scope>NUCLEOTIDE SEQUENCE [LARGE SCALE MRNA]</scope>
    <source>
        <tissue>Brain cortex</tissue>
    </source>
</reference>
<keyword id="KW-1017">Isopeptide bond</keyword>
<keyword id="KW-0488">Methylation</keyword>
<keyword id="KW-1185">Reference proteome</keyword>
<keyword id="KW-0832">Ubl conjugation</keyword>
<keyword id="KW-0833">Ubl conjugation pathway</keyword>
<comment type="function">
    <text evidence="1 2">Core component of multiple cullin-RING-based SCF (SKP1-CUL1-F-box protein) E3 ubiquitin-protein ligase complexes, which mediate the ubiquitination of proteins involved in cell cycle progression, signal transduction and transcription. SCF complexes and ARIH1 collaborate in tandem to mediate ubiquitination of target proteins. In the SCF complex, serves as a rigid scaffold that organizes the SKP1-F-box protein and RBX1 subunits. May contribute to catalysis through positioning of the substrate and the ubiquitin-conjugating enzyme. The E3 ubiquitin-protein ligase activity of the complex is dependent on the neddylation of the cullin subunit and exchange of the substrate recognition component is mediated by TIP120A/CAND1. The functional specificity of the SCF complex depends on the F-box protein as substrate recognition component. SCF(BTRC) and SCF(FBXW11) direct ubiquitination of CTNNB1 and participate in Wnt signaling. SCF(FBXW11) directs ubiquitination of phosphorylated NFKBIA. SCF(BTRC) directs ubiquitination of NFKBIB, NFKBIE, ATF4, SMAD3, SMAD4, CDC25A, FBXO5 and probably NFKB2. SCF(BTRC) and/or SCF(FBXW11) direct ubiquitination of CEP68. SCF(SKP2) directs ubiquitination of phosphorylated CDKN1B/p27kip and is involved in regulation of G1/S transition. SCF(SKP2) directs ubiquitination of ORC1, CDT1, RBL2, ELF4, CDKN1A, RAG2, FOXO1A, and probably MYC and TAL1. SCF(FBXW7) directs ubiquitination of cyclin E, NOTCH1 released notch intracellular domain (NICD), and probably PSEN1. SCF(FBXW2) directs ubiquitination of GCM1. SCF(FBXO32) directs ubiquitination of MYOD1. SCF(FBXO7) directs ubiquitination of BIRC2 and DLGAP5. SCF(FBXO33) directs ubiquitination of YBX1. SCF(FBXO1) directs ubiquitination of BCL6 and DTL but does not seem to direct ubiquitination of TP53. SCF(BTRC) mediates the ubiquitination of NFKBIA at 'Lys-21' and 'Lys-22'; the degradation frees the associated NFKB1-RELA dimer to translocate into the nucleus and to activate transcription. SCF(CCNF) directs ubiquitination of CCP110. SCF(FBXL3) and SCF(FBXL21) direct ubiquitination of CRY1 and CRY2. SCF(FBXO9) directs ubiquitination of TTI1 and TELO2. SCF(FBXO10) directs ubiquitination of BCL2. Interacts with COPS9. Interacts with KAT7, probably as part of an SCF complex; the interaction mediates KAT7 ubiquitination. Neddylated CUL1-RBX1 ubiquitinates p53/TP53 recruited by Cul7-RING(FBXW8) complex (By similarity). SCF(BTRC) directs 'Lys-48'-linked ubiquitination of UBR2 in the T-cell receptor signaling pathway (By similarity). The SCF(FBXO31) protein ligase complex specifically mediates the ubiquitination of proteins amidated at their C-terminus in response to oxidative stress (By similarity).</text>
</comment>
<comment type="pathway">
    <text evidence="1">Protein modification; protein ubiquitination.</text>
</comment>
<comment type="subunit">
    <text evidence="1 2">Component of multiple Cul1-RING E3 ubiquitin-protein ligase complexes commonly known as SCF (SKP1-CUL1-F-box) complexes, consisting of CUL1, SKP1, RBX1 and a variable F-box domain-containing protein as substrate-specific subunit. Component of the SCF(FBXW11) complex containing FBXW11. Component of the SCF(SKP2) complex containing SKP2, in which it interacts directly with SKP1, SKP2 and RBX1. Component of the SCF(FBXW2) complex containing FBXW2. Component of the SCF(FBXO32) complex containing FBXO32. Component of the probable SCF(FBXO7) complex containing FBXO7. Component of the SCF(FBXO10) complex containing FBXO10. Component of the SCF(FBXO11) complex containing FBXO11. Component of the SCF(FBXO25) complex containing FBXO25. Component of the SCF(FBXO33) complex containing FBXO33. Component of the probable SCF(FBXO4) complex containing FBXO4. Component of the SCF(FBXO44) complex, composed of SKP1, CUL1 and FBXO44. Component of the SCF(BTRC) complex, composed of SKP1, CUL1 and BTRC. This complex binds phosphorylated NFKBIA. Part of a SCF complex consisting of CUL1, RBX1, SKP1 and FBXO2. Component of a SCF(SKP2)-like complex containing CUL1, SKP1, TRIM21 and SKP2. Component of the SCF(FBXO17) complex, composed of SKP1, CUL1 and FBXO17. Component of the SCF(FBXO27) complex, composed of SKP1, CUL1 and FBXO27. Component of the SCF(CCNF) complex consisting of CUL1, RBX1, SKP1 and CCNF (By similarity). Interacts with CCNF (By similarity). Component of the SCF(FBXL3) complex composed of CUL1, SKP1, RBX1 and FBXL3. Component of the SCF(FBXL21) complex composed of CUL1, SKP1, RBX1 and FBXL21. Component of the SCF(FBXO9) composed of CUL1, SKP1, RBX1 and FBXO9. Component of the SCF(FBXW7) composed of CUL1, SKP1, RBX1 and FBXW7. Component of the SCF(FBXO31) complex composed of CUL1, SKP1, RBX1 and FBXO31. Interacts with CHEK2; mediates CHEK2 ubiquitination and regulates its function. Part of a complex with TIP120A/CAND1 and RBX1. The unneddylated form interacts with TIP120A/CAND1 and the interaction mediates the exchange of the F-box substrate-specific subunit. Can self-associate. Interacts with FBXW8. Interacts with RNF7. Interacts with TRIM21. Interacts with COPS2. Interacts with DCUN1D1 and UBE2M. Interacts with DCUN1D3. Interacts with DCUN1D4. Identified in a complex with RBX1 and GLMN (By similarity). Interacts with CEP68 as part of the SCF(FBXW11) complex; the interaction is probably mediated by FBXW11 and the complex also contains CDK5RAP2 and PCNT. Interacts (when neddylated) with ARIH1; leading to activate the E3 ligase activity of ARIH1. Interacts with COPS9. Interacts with UBXN1 (By similarity). Interacts with KAT7, probably as part of an SCF complex; the interaction mediates KAT7 ubiquitination (By similarity). Interacts with NOTCH2 (By similarity). Part of a complex that contains DCUN1D5, CUL1 and RBX1; this interaction is bridged by CUL1 (By similarity). Interacts (unneddylated form) with DCUN1D1, DCUN1D2, DCUN1D3, DCUN1D4 and DCUN1D5; these interactions promote the cullin neddylation (By similarity). Interacts (via the C-terminal domain) with CUL7; the interaction seems to be mediated by FBXW8; it is likely specific to FBXW8, but not other F-box proteins (By similarity). Interacts with UBR2, as part of SCF(BTRC) complex; the interaction mediates 'Lys-48'-linked ubiquitination of UBR2 and is regulated by DUSP22 in the T-cell receptor signaling pathway (By similarity).</text>
</comment>
<comment type="domain">
    <text evidence="1">The Cullin neddylation domain restrains the RING domain of RBX1 in the E3 ubiquitin-protein ligase complex; this restraint is removed upon neddylation of the cullin.</text>
</comment>
<comment type="PTM">
    <text evidence="1">Neddylated; which enhances the ubiquitination activity of SCF (By similarity). Neddylation prevents binding of the inhibitor CAND1 (By similarity). Neddylation leads to structural rearrangment in the complex that allows interaction between the E2 ubiquitin-conjugating enzyme and the acceptor ubiquitin (By similarity). Deneddylated via its interaction with the COP9 signalosome (CSN) complex (By similarity).</text>
</comment>
<comment type="similarity">
    <text evidence="4">Belongs to the cullin family.</text>
</comment>
<organism>
    <name type="scientific">Pongo abelii</name>
    <name type="common">Sumatran orangutan</name>
    <name type="synonym">Pongo pygmaeus abelii</name>
    <dbReference type="NCBI Taxonomy" id="9601"/>
    <lineage>
        <taxon>Eukaryota</taxon>
        <taxon>Metazoa</taxon>
        <taxon>Chordata</taxon>
        <taxon>Craniata</taxon>
        <taxon>Vertebrata</taxon>
        <taxon>Euteleostomi</taxon>
        <taxon>Mammalia</taxon>
        <taxon>Eutheria</taxon>
        <taxon>Euarchontoglires</taxon>
        <taxon>Primates</taxon>
        <taxon>Haplorrhini</taxon>
        <taxon>Catarrhini</taxon>
        <taxon>Hominidae</taxon>
        <taxon>Pongo</taxon>
    </lineage>
</organism>
<accession>Q5R4G6</accession>
<name>CUL1_PONAB</name>